<sequence>MLSVNTIKNTLLAAVLVSVPATAQVSGNGHPNLIVTEQDVANIAASWESYDAYAEQLNADKTNLDAFMAEGVVVPMPKDAGGGYTHEQHKRNYKAIRNAGFLYQVTGDEKYLTFAKDLLLAYAKMYPSLGEHPNRKEQSPGRLFWQSLNEAVWLVYSIQGYDAIIDGLAAEEKQEIESGVFLPMAKFLSVESPETFNKIHNHGTWAVAAVGMTGYVLGNDELVEISLMGLDKTGKAGFMKQLDKLFSPDGYYTEGPYYQRYALMPFIWFAKAIETNEPERKIFEYRNNILLKAVYTTIDLSYAGYFFPINDALKDKGIDTVELVHALAIVYSITGDNTLLDIAQEQGRISLTGDGLKVAKAVGEGLTQPYNYRSILLGDGADGDQGALSIHRLGEGHNHMALVAKNTSQGMGHGHFDKLNWLLYDNGNEIVTDYGAARYLNVEAKYGGHYLAENNTWAKQTIAHNTLVVNEQSHFYGDVTTADLHHPEVLSFYSGEDYQLSSAKEANAYDGVEFVRSMLLVNVPSLEHPIVVDVLNVSADKASTFDLPLYFNGQIIDFSFKVKDNKNVMKMLGKRNGYQHLWLRNTAPVGDASERATWILDDRFYSYAFVTSTPSKKQNVLIAELGANDPNYNLRQQQVLIRRVEKAKQASFVSVLEPHGKYDGSLETTSGAYSNVKSVKHVSENGKDVVVVDLKDGSNVVVALSYNANSEQVHKVNAGEEAIEWKGFSSVVVRRK</sequence>
<accession>Q21FJ0</accession>
<feature type="signal peptide" evidence="2">
    <location>
        <begin position="1"/>
        <end position="23"/>
    </location>
</feature>
<feature type="chain" id="PRO_5004200187" description="Exo-oligoalginate lyase">
    <location>
        <begin position="24"/>
        <end position="736"/>
    </location>
</feature>
<feature type="active site" description="Proton donor" evidence="8">
    <location>
        <position position="258"/>
    </location>
</feature>
<feature type="active site" description="Proton acceptor" evidence="1">
    <location>
        <position position="413"/>
    </location>
</feature>
<feature type="binding site" evidence="4 11">
    <location>
        <position position="136"/>
    </location>
    <ligand>
        <name>substrate</name>
    </ligand>
</feature>
<feature type="binding site" evidence="4 11">
    <location>
        <begin position="146"/>
        <end position="149"/>
    </location>
    <ligand>
        <name>substrate</name>
    </ligand>
</feature>
<feature type="binding site" evidence="4 11">
    <location>
        <position position="198"/>
    </location>
    <ligand>
        <name>substrate</name>
    </ligand>
</feature>
<feature type="binding site" evidence="4 11">
    <location>
        <position position="202"/>
    </location>
    <ligand>
        <name>substrate</name>
    </ligand>
</feature>
<feature type="binding site" evidence="4 11">
    <location>
        <begin position="257"/>
        <end position="260"/>
    </location>
    <ligand>
        <name>substrate</name>
    </ligand>
</feature>
<feature type="binding site" evidence="4 10 11 12 13">
    <location>
        <position position="415"/>
    </location>
    <ligand>
        <name>Zn(2+)</name>
        <dbReference type="ChEBI" id="CHEBI:29105"/>
    </ligand>
</feature>
<feature type="binding site" evidence="4 10 11 12 13">
    <location>
        <position position="433"/>
    </location>
    <ligand>
        <name>Zn(2+)</name>
        <dbReference type="ChEBI" id="CHEBI:29105"/>
    </ligand>
</feature>
<feature type="binding site" evidence="4 11">
    <location>
        <position position="438"/>
    </location>
    <ligand>
        <name>substrate</name>
    </ligand>
</feature>
<feature type="binding site" evidence="4 10 11 12 13">
    <location>
        <position position="464"/>
    </location>
    <ligand>
        <name>Zn(2+)</name>
        <dbReference type="ChEBI" id="CHEBI:29105"/>
    </ligand>
</feature>
<feature type="binding site" evidence="4 11">
    <location>
        <position position="667"/>
    </location>
    <ligand>
        <name>substrate</name>
    </ligand>
</feature>
<feature type="site" description="Neutralizes the sugar carboxylate group at subsite +1" evidence="8">
    <location>
        <position position="201"/>
    </location>
</feature>
<feature type="site" description="Neutralizes the sugar carboxylate group at subsite +1" evidence="8">
    <location>
        <position position="202"/>
    </location>
</feature>
<feature type="mutagenesis site" description="1600-fold decrease in catalytic efficiency." evidence="4">
    <original>N</original>
    <variation>A</variation>
    <location>
        <position position="149"/>
    </location>
</feature>
<feature type="mutagenesis site" description="Complete loss of catalytic activity." evidence="4">
    <original>N</original>
    <variation>A</variation>
    <location>
        <position position="201"/>
    </location>
</feature>
<feature type="mutagenesis site" description="20-fold decrease in catalytic efficiency." evidence="4">
    <original>H</original>
    <variation>L</variation>
    <location>
        <position position="202"/>
    </location>
</feature>
<feature type="mutagenesis site" description="Complete loss of catalytic activity." evidence="4">
    <original>Y</original>
    <variation>A</variation>
    <location>
        <position position="258"/>
    </location>
</feature>
<feature type="mutagenesis site" description="2000-fold decrease in catalytic efficiency." evidence="4">
    <original>R</original>
    <variation>A</variation>
    <location>
        <position position="260"/>
    </location>
</feature>
<feature type="mutagenesis site" description="1000-fold decrease in catalytic activity." evidence="4">
    <original>H</original>
    <variation>A</variation>
    <location>
        <position position="415"/>
    </location>
</feature>
<feature type="mutagenesis site" description="4400-fold decrease in catalytic efficiency." evidence="4">
    <original>R</original>
    <variation>A</variation>
    <location>
        <position position="438"/>
    </location>
</feature>
<feature type="mutagenesis site" description="Complete loss of catalytic activity." evidence="4">
    <original>Y</original>
    <variation>A</variation>
    <location>
        <position position="450"/>
    </location>
</feature>
<feature type="strand" evidence="15">
    <location>
        <begin position="32"/>
        <end position="36"/>
    </location>
</feature>
<feature type="helix" evidence="15">
    <location>
        <begin position="37"/>
        <end position="46"/>
    </location>
</feature>
<feature type="helix" evidence="15">
    <location>
        <begin position="47"/>
        <end position="49"/>
    </location>
</feature>
<feature type="helix" evidence="15">
    <location>
        <begin position="51"/>
        <end position="68"/>
    </location>
</feature>
<feature type="helix" evidence="15">
    <location>
        <begin position="84"/>
        <end position="106"/>
    </location>
</feature>
<feature type="helix" evidence="15">
    <location>
        <begin position="109"/>
        <end position="125"/>
    </location>
</feature>
<feature type="helix" evidence="15">
    <location>
        <begin position="126"/>
        <end position="128"/>
    </location>
</feature>
<feature type="strand" evidence="14">
    <location>
        <begin position="137"/>
        <end position="140"/>
    </location>
</feature>
<feature type="strand" evidence="15">
    <location>
        <begin position="142"/>
        <end position="146"/>
    </location>
</feature>
<feature type="helix" evidence="15">
    <location>
        <begin position="147"/>
        <end position="162"/>
    </location>
</feature>
<feature type="helix" evidence="15">
    <location>
        <begin position="165"/>
        <end position="167"/>
    </location>
</feature>
<feature type="helix" evidence="15">
    <location>
        <begin position="170"/>
        <end position="179"/>
    </location>
</feature>
<feature type="helix" evidence="15">
    <location>
        <begin position="181"/>
        <end position="188"/>
    </location>
</feature>
<feature type="turn" evidence="15">
    <location>
        <begin position="189"/>
        <end position="191"/>
    </location>
</feature>
<feature type="helix" evidence="15">
    <location>
        <begin position="193"/>
        <end position="196"/>
    </location>
</feature>
<feature type="helix" evidence="15">
    <location>
        <begin position="201"/>
        <end position="217"/>
    </location>
</feature>
<feature type="helix" evidence="15">
    <location>
        <begin position="220"/>
        <end position="228"/>
    </location>
</feature>
<feature type="strand" evidence="15">
    <location>
        <begin position="232"/>
        <end position="237"/>
    </location>
</feature>
<feature type="helix" evidence="15">
    <location>
        <begin position="238"/>
        <end position="244"/>
    </location>
</feature>
<feature type="helix" evidence="15">
    <location>
        <begin position="256"/>
        <end position="276"/>
    </location>
</feature>
<feature type="helix" evidence="15">
    <location>
        <begin position="278"/>
        <end position="280"/>
    </location>
</feature>
<feature type="turn" evidence="15">
    <location>
        <begin position="282"/>
        <end position="284"/>
    </location>
</feature>
<feature type="helix" evidence="15">
    <location>
        <begin position="285"/>
        <end position="299"/>
    </location>
</feature>
<feature type="helix" evidence="15">
    <location>
        <begin position="321"/>
        <end position="334"/>
    </location>
</feature>
<feature type="helix" evidence="15">
    <location>
        <begin position="339"/>
        <end position="346"/>
    </location>
</feature>
<feature type="helix" evidence="15">
    <location>
        <begin position="353"/>
        <end position="363"/>
    </location>
</feature>
<feature type="strand" evidence="15">
    <location>
        <begin position="375"/>
        <end position="378"/>
    </location>
</feature>
<feature type="turn" evidence="14">
    <location>
        <begin position="380"/>
        <end position="383"/>
    </location>
</feature>
<feature type="strand" evidence="15">
    <location>
        <begin position="385"/>
        <end position="396"/>
    </location>
</feature>
<feature type="strand" evidence="15">
    <location>
        <begin position="400"/>
        <end position="407"/>
    </location>
</feature>
<feature type="helix" evidence="15">
    <location>
        <begin position="411"/>
        <end position="413"/>
    </location>
</feature>
<feature type="strand" evidence="15">
    <location>
        <begin position="420"/>
        <end position="425"/>
    </location>
</feature>
<feature type="strand" evidence="15">
    <location>
        <begin position="428"/>
        <end position="431"/>
    </location>
</feature>
<feature type="turn" evidence="15">
    <location>
        <begin position="443"/>
        <end position="445"/>
    </location>
</feature>
<feature type="helix" evidence="15">
    <location>
        <begin position="446"/>
        <end position="448"/>
    </location>
</feature>
<feature type="helix" evidence="15">
    <location>
        <begin position="452"/>
        <end position="456"/>
    </location>
</feature>
<feature type="turn" evidence="15">
    <location>
        <begin position="457"/>
        <end position="459"/>
    </location>
</feature>
<feature type="helix" evidence="15">
    <location>
        <begin position="461"/>
        <end position="463"/>
    </location>
</feature>
<feature type="strand" evidence="15">
    <location>
        <begin position="464"/>
        <end position="466"/>
    </location>
</feature>
<feature type="helix" evidence="15">
    <location>
        <begin position="474"/>
        <end position="477"/>
    </location>
</feature>
<feature type="helix" evidence="15">
    <location>
        <begin position="479"/>
        <end position="483"/>
    </location>
</feature>
<feature type="strand" evidence="15">
    <location>
        <begin position="488"/>
        <end position="494"/>
    </location>
</feature>
<feature type="strand" evidence="15">
    <location>
        <begin position="496"/>
        <end position="505"/>
    </location>
</feature>
<feature type="strand" evidence="15">
    <location>
        <begin position="507"/>
        <end position="509"/>
    </location>
</feature>
<feature type="strand" evidence="15">
    <location>
        <begin position="512"/>
        <end position="521"/>
    </location>
</feature>
<feature type="strand" evidence="15">
    <location>
        <begin position="526"/>
        <end position="528"/>
    </location>
</feature>
<feature type="strand" evidence="15">
    <location>
        <begin position="530"/>
        <end position="551"/>
    </location>
</feature>
<feature type="strand" evidence="15">
    <location>
        <begin position="553"/>
        <end position="560"/>
    </location>
</feature>
<feature type="strand" evidence="15">
    <location>
        <begin position="568"/>
        <end position="572"/>
    </location>
</feature>
<feature type="helix" evidence="15">
    <location>
        <begin position="578"/>
        <end position="580"/>
    </location>
</feature>
<feature type="strand" evidence="15">
    <location>
        <begin position="581"/>
        <end position="588"/>
    </location>
</feature>
<feature type="strand" evidence="15">
    <location>
        <begin position="594"/>
        <end position="600"/>
    </location>
</feature>
<feature type="strand" evidence="15">
    <location>
        <begin position="603"/>
        <end position="612"/>
    </location>
</feature>
<feature type="strand" evidence="15">
    <location>
        <begin position="618"/>
        <end position="625"/>
    </location>
</feature>
<feature type="strand" evidence="15">
    <location>
        <begin position="638"/>
        <end position="659"/>
    </location>
</feature>
<feature type="strand" evidence="15">
    <location>
        <begin position="661"/>
        <end position="663"/>
    </location>
</feature>
<feature type="turn" evidence="15">
    <location>
        <begin position="664"/>
        <end position="667"/>
    </location>
</feature>
<feature type="strand" evidence="15">
    <location>
        <begin position="668"/>
        <end position="670"/>
    </location>
</feature>
<feature type="strand" evidence="15">
    <location>
        <begin position="675"/>
        <end position="684"/>
    </location>
</feature>
<feature type="strand" evidence="15">
    <location>
        <begin position="687"/>
        <end position="694"/>
    </location>
</feature>
<feature type="strand" evidence="15">
    <location>
        <begin position="699"/>
        <end position="704"/>
    </location>
</feature>
<feature type="strand" evidence="15">
    <location>
        <begin position="713"/>
        <end position="717"/>
    </location>
</feature>
<feature type="strand" evidence="15">
    <location>
        <begin position="719"/>
        <end position="732"/>
    </location>
</feature>
<proteinExistence type="evidence at protein level"/>
<comment type="function">
    <text evidence="3 4">Catalyzes the depolymerization of alginate through an exolytic mode of action, via a beta-elimination mechanism. Preferentially acts on oligoalginates with degrees of polymerization higher than 2 to produce the alginate monomer, 4-deoxy-L-erythro-5-hexoseulose uronic acid.</text>
</comment>
<comment type="catalytic activity">
    <reaction evidence="3 4">
        <text>Cleavage of 4-deoxy-alpha-L-erythro-hex-4-enopyranuronoside oligosaccharides into 4-deoxy-alpha-L-erythro-hex-4-enopyranuronate monosaccharides.</text>
        <dbReference type="EC" id="4.2.2.26"/>
    </reaction>
</comment>
<comment type="cofactor">
    <cofactor evidence="4">
        <name>Zn(2+)</name>
        <dbReference type="ChEBI" id="CHEBI:29105"/>
    </cofactor>
    <text evidence="4">The zinc ion seen in the crystal structure is located far away from the active site and likely plays a structural role. However, it seems important for enzyme activity since the mutation of one of its coordination residues causes a high decrease in activity.</text>
</comment>
<comment type="biophysicochemical properties">
    <kinetics>
        <KM evidence="3">35.2 mg/ml for alginate (at pH 6 and 40 degrees Celsius)</KM>
        <KM evidence="4">22.3 uM for low viscosity alginate (at pH 7.5 and 30 degrees Celsius)</KM>
        <KM evidence="4">7.7 uM for alginate trisaccharide (at pH 7.5 and 30 degrees Celsius)</KM>
        <Vmax evidence="3">41.7 umol/min/mg enzyme with alginate as substrate (at pH 6 and 40 degrees Celsius)</Vmax>
        <text evidence="4">kcat is 56.9 sec(-1) with low viscosity alginate as substrate. kcat is 62.4 sec(-1) with alginate trisaccharide as substrate (at pH 7.5 and 30 degrees Celsius).</text>
    </kinetics>
    <phDependence>
        <text evidence="3">Optimum pH is 6.</text>
    </phDependence>
    <temperatureDependence>
        <text evidence="3">Optimum temperature is 40 degrees Celsius.</text>
    </temperatureDependence>
</comment>
<comment type="subunit">
    <text evidence="4">Homodimer.</text>
</comment>
<comment type="subcellular location">
    <subcellularLocation>
        <location evidence="6">Periplasm</location>
    </subcellularLocation>
</comment>
<comment type="biotechnology">
    <text evidence="7">Could be used as the key enzyme to produce alginate monomers in the process of utilizing alginate for biofuels and chemicals production.</text>
</comment>
<comment type="similarity">
    <text evidence="6">Belongs to the polysaccharide lyase 17 family.</text>
</comment>
<gene>
    <name evidence="5" type="primary">alg17C</name>
    <name evidence="9" type="synonym">alg17A</name>
    <name evidence="9" type="ordered locus">Sde_3284</name>
</gene>
<dbReference type="EC" id="4.2.2.26" evidence="3 4"/>
<dbReference type="EMBL" id="CP000282">
    <property type="protein sequence ID" value="ABD82539.1"/>
    <property type="molecule type" value="Genomic_DNA"/>
</dbReference>
<dbReference type="RefSeq" id="WP_011469755.1">
    <property type="nucleotide sequence ID" value="NC_007912.1"/>
</dbReference>
<dbReference type="PDB" id="4NEI">
    <property type="method" value="X-ray"/>
    <property type="resolution" value="1.85 A"/>
    <property type="chains" value="A/B=1-736"/>
</dbReference>
<dbReference type="PDB" id="4OJZ">
    <property type="method" value="X-ray"/>
    <property type="resolution" value="1.90 A"/>
    <property type="chains" value="A/B=1-736"/>
</dbReference>
<dbReference type="PDB" id="4OK2">
    <property type="method" value="X-ray"/>
    <property type="resolution" value="2.45 A"/>
    <property type="chains" value="A/B=1-736"/>
</dbReference>
<dbReference type="PDB" id="4OK4">
    <property type="method" value="X-ray"/>
    <property type="resolution" value="1.70 A"/>
    <property type="chains" value="A/B=1-736"/>
</dbReference>
<dbReference type="PDBsum" id="4NEI"/>
<dbReference type="PDBsum" id="4OJZ"/>
<dbReference type="PDBsum" id="4OK2"/>
<dbReference type="PDBsum" id="4OK4"/>
<dbReference type="SMR" id="Q21FJ0"/>
<dbReference type="STRING" id="203122.Sde_3284"/>
<dbReference type="CAZy" id="PL17">
    <property type="family name" value="Polysaccharide Lyase Family 17"/>
</dbReference>
<dbReference type="GeneID" id="98614905"/>
<dbReference type="KEGG" id="sde:Sde_3284"/>
<dbReference type="eggNOG" id="ENOG502Z7XC">
    <property type="taxonomic scope" value="Bacteria"/>
</dbReference>
<dbReference type="HOGENOM" id="CLU_022650_0_0_6"/>
<dbReference type="OrthoDB" id="9772435at2"/>
<dbReference type="BRENDA" id="4.2.2.11">
    <property type="organism ID" value="7555"/>
</dbReference>
<dbReference type="BRENDA" id="4.2.2.3">
    <property type="organism ID" value="7555"/>
</dbReference>
<dbReference type="EvolutionaryTrace" id="Q21FJ0"/>
<dbReference type="Proteomes" id="UP000001947">
    <property type="component" value="Chromosome"/>
</dbReference>
<dbReference type="GO" id="GO:0042597">
    <property type="term" value="C:periplasmic space"/>
    <property type="evidence" value="ECO:0007669"/>
    <property type="project" value="UniProtKB-SubCell"/>
</dbReference>
<dbReference type="GO" id="GO:0052764">
    <property type="term" value="F:exo-oligoalginate lyase activity"/>
    <property type="evidence" value="ECO:0007669"/>
    <property type="project" value="UniProtKB-EC"/>
</dbReference>
<dbReference type="GO" id="GO:0046872">
    <property type="term" value="F:metal ion binding"/>
    <property type="evidence" value="ECO:0007669"/>
    <property type="project" value="UniProtKB-KW"/>
</dbReference>
<dbReference type="GO" id="GO:0000272">
    <property type="term" value="P:polysaccharide catabolic process"/>
    <property type="evidence" value="ECO:0007669"/>
    <property type="project" value="UniProtKB-KW"/>
</dbReference>
<dbReference type="Gene3D" id="2.70.98.70">
    <property type="match status" value="1"/>
</dbReference>
<dbReference type="Gene3D" id="1.50.10.100">
    <property type="entry name" value="Chondroitin AC/alginate lyase"/>
    <property type="match status" value="1"/>
</dbReference>
<dbReference type="InterPro" id="IPR055076">
    <property type="entry name" value="Alg17C_C"/>
</dbReference>
<dbReference type="InterPro" id="IPR008397">
    <property type="entry name" value="Alginate_lyase_dom"/>
</dbReference>
<dbReference type="InterPro" id="IPR008929">
    <property type="entry name" value="Chondroitin_lyas"/>
</dbReference>
<dbReference type="InterPro" id="IPR012480">
    <property type="entry name" value="Hepar_II_III_C"/>
</dbReference>
<dbReference type="PANTHER" id="PTHR39210">
    <property type="entry name" value="HEPARIN-SULFATE LYASE"/>
    <property type="match status" value="1"/>
</dbReference>
<dbReference type="PANTHER" id="PTHR39210:SF1">
    <property type="entry name" value="HEPARIN-SULFATE LYASE"/>
    <property type="match status" value="1"/>
</dbReference>
<dbReference type="Pfam" id="PF22686">
    <property type="entry name" value="Alg17C_C"/>
    <property type="match status" value="1"/>
</dbReference>
<dbReference type="Pfam" id="PF05426">
    <property type="entry name" value="Alginate_lyase"/>
    <property type="match status" value="1"/>
</dbReference>
<dbReference type="Pfam" id="PF07940">
    <property type="entry name" value="Hepar_II_III_C"/>
    <property type="match status" value="1"/>
</dbReference>
<dbReference type="SUPFAM" id="SSF48230">
    <property type="entry name" value="Chondroitin AC/alginate lyase"/>
    <property type="match status" value="1"/>
</dbReference>
<keyword id="KW-0002">3D-structure</keyword>
<keyword id="KW-0119">Carbohydrate metabolism</keyword>
<keyword id="KW-0456">Lyase</keyword>
<keyword id="KW-0479">Metal-binding</keyword>
<keyword id="KW-0574">Periplasm</keyword>
<keyword id="KW-0624">Polysaccharide degradation</keyword>
<keyword id="KW-1185">Reference proteome</keyword>
<keyword id="KW-0732">Signal</keyword>
<keyword id="KW-0862">Zinc</keyword>
<protein>
    <recommendedName>
        <fullName evidence="5">Exo-oligoalginate lyase</fullName>
        <ecNumber evidence="3 4">4.2.2.26</ecNumber>
    </recommendedName>
    <alternativeName>
        <fullName evidence="5">Exo-type alginate lyase</fullName>
    </alternativeName>
    <alternativeName>
        <fullName evidence="6">Exolytic alginate lyase</fullName>
    </alternativeName>
</protein>
<evidence type="ECO:0000250" key="1">
    <source>
        <dbReference type="UniProtKB" id="B2FSW8"/>
    </source>
</evidence>
<evidence type="ECO:0000255" key="2"/>
<evidence type="ECO:0000269" key="3">
    <source>
    </source>
</evidence>
<evidence type="ECO:0000269" key="4">
    <source>
    </source>
</evidence>
<evidence type="ECO:0000303" key="5">
    <source>
    </source>
</evidence>
<evidence type="ECO:0000305" key="6"/>
<evidence type="ECO:0000305" key="7">
    <source>
    </source>
</evidence>
<evidence type="ECO:0000305" key="8">
    <source>
    </source>
</evidence>
<evidence type="ECO:0000312" key="9">
    <source>
        <dbReference type="EMBL" id="ABD82539.1"/>
    </source>
</evidence>
<evidence type="ECO:0007744" key="10">
    <source>
        <dbReference type="PDB" id="4NEI"/>
    </source>
</evidence>
<evidence type="ECO:0007744" key="11">
    <source>
        <dbReference type="PDB" id="4OJZ"/>
    </source>
</evidence>
<evidence type="ECO:0007744" key="12">
    <source>
        <dbReference type="PDB" id="4OK2"/>
    </source>
</evidence>
<evidence type="ECO:0007744" key="13">
    <source>
        <dbReference type="PDB" id="4OK4"/>
    </source>
</evidence>
<evidence type="ECO:0007829" key="14">
    <source>
        <dbReference type="PDB" id="4OJZ"/>
    </source>
</evidence>
<evidence type="ECO:0007829" key="15">
    <source>
        <dbReference type="PDB" id="4OK4"/>
    </source>
</evidence>
<name>EALGL_SACD2</name>
<reference key="1">
    <citation type="journal article" date="2008" name="PLoS Genet.">
        <title>Complete genome sequence of the complex carbohydrate-degrading marine bacterium, Saccharophagus degradans strain 2-40 T.</title>
        <authorList>
            <person name="Weiner R.M."/>
            <person name="Taylor L.E. II"/>
            <person name="Henrissat B."/>
            <person name="Hauser L."/>
            <person name="Land M."/>
            <person name="Coutinho P.M."/>
            <person name="Rancurel C."/>
            <person name="Saunders E.H."/>
            <person name="Longmire A.G."/>
            <person name="Zhang H."/>
            <person name="Bayer E.A."/>
            <person name="Gilbert H.J."/>
            <person name="Larimer F."/>
            <person name="Zhulin I.B."/>
            <person name="Ekborg N.A."/>
            <person name="Lamed R."/>
            <person name="Richardson P.M."/>
            <person name="Borovok I."/>
            <person name="Hutcheson S."/>
        </authorList>
    </citation>
    <scope>NUCLEOTIDE SEQUENCE [LARGE SCALE GENOMIC DNA]</scope>
    <source>
        <strain>2-40 / ATCC 43961 / DSM 17024</strain>
    </source>
</reference>
<reference key="2">
    <citation type="journal article" date="2012" name="Appl. Microbiol. Biotechnol.">
        <title>Depolymerization of alginate into a monomeric sugar acid using Alg17C, an exo-oligoalginate lyase cloned from Saccharophagus degradans 2-40.</title>
        <authorList>
            <person name="Kim H.T."/>
            <person name="Chung J.H."/>
            <person name="Wang D."/>
            <person name="Lee J."/>
            <person name="Woo H.C."/>
            <person name="Choi I.G."/>
            <person name="Kim K.H."/>
        </authorList>
    </citation>
    <scope>FUNCTION</scope>
    <scope>CATALYTIC ACTIVITY</scope>
    <scope>BIOPHYSICOCHEMICAL PROPERTIES</scope>
    <scope>BIOTECHNOLOGY</scope>
    <source>
        <strain>2-40 / ATCC 43961 / DSM 17024</strain>
    </source>
</reference>
<reference key="3">
    <citation type="journal article" date="2014" name="J. Biol. Chem.">
        <title>Structure of a PL17 family alginate lyase demonstrates functional similarities among exotype depolymerases.</title>
        <authorList>
            <person name="Park D."/>
            <person name="Jagtap S."/>
            <person name="Nair S.K."/>
        </authorList>
    </citation>
    <scope>X-RAY CRYSTALLOGRAPHY (1.70 ANGSTROMS) OF 24-736 OF WILD-TYPE AND MUTANTS LEU-202 AND ALA-258 IN COMPLEX WITH ZINC AND A TRISACCHARIDE SUBSTRATE</scope>
    <scope>FUNCTION</scope>
    <scope>CATALYTIC ACTIVITY</scope>
    <scope>BIOPHYSICOCHEMICAL PROPERTIES</scope>
    <scope>COFACTOR</scope>
    <scope>SUBUNIT</scope>
    <scope>MUTAGENESIS OF ASN-149; ASN-201; HIS-202; TYR-258; ARG-260; HIS-415; ARG-438 AND TYR-450</scope>
    <scope>REACTION MECHANISM</scope>
    <scope>ACTIVE SITE</scope>
    <source>
        <strain>2-40 / ATCC 43961 / DSM 17024</strain>
    </source>
</reference>
<organism>
    <name type="scientific">Saccharophagus degradans (strain 2-40 / ATCC 43961 / DSM 17024)</name>
    <dbReference type="NCBI Taxonomy" id="203122"/>
    <lineage>
        <taxon>Bacteria</taxon>
        <taxon>Pseudomonadati</taxon>
        <taxon>Pseudomonadota</taxon>
        <taxon>Gammaproteobacteria</taxon>
        <taxon>Cellvibrionales</taxon>
        <taxon>Cellvibrionaceae</taxon>
        <taxon>Saccharophagus</taxon>
    </lineage>
</organism>